<keyword id="KW-0030">Aminoacyl-tRNA synthetase</keyword>
<keyword id="KW-0067">ATP-binding</keyword>
<keyword id="KW-0963">Cytoplasm</keyword>
<keyword id="KW-0436">Ligase</keyword>
<keyword id="KW-0547">Nucleotide-binding</keyword>
<keyword id="KW-0648">Protein biosynthesis</keyword>
<keyword id="KW-1185">Reference proteome</keyword>
<feature type="chain" id="PRO_0000151961" description="Leucine--tRNA ligase">
    <location>
        <begin position="1"/>
        <end position="872"/>
    </location>
</feature>
<feature type="short sequence motif" description="'HIGH' region">
    <location>
        <begin position="42"/>
        <end position="52"/>
    </location>
</feature>
<feature type="short sequence motif" description="'KMSKS' region">
    <location>
        <begin position="634"/>
        <end position="638"/>
    </location>
</feature>
<feature type="binding site" evidence="1">
    <location>
        <position position="637"/>
    </location>
    <ligand>
        <name>ATP</name>
        <dbReference type="ChEBI" id="CHEBI:30616"/>
    </ligand>
</feature>
<accession>Q8YS09</accession>
<protein>
    <recommendedName>
        <fullName evidence="1">Leucine--tRNA ligase</fullName>
        <ecNumber evidence="1">6.1.1.4</ecNumber>
    </recommendedName>
    <alternativeName>
        <fullName evidence="1">Leucyl-tRNA synthetase</fullName>
        <shortName evidence="1">LeuRS</shortName>
    </alternativeName>
</protein>
<comment type="catalytic activity">
    <reaction evidence="1">
        <text>tRNA(Leu) + L-leucine + ATP = L-leucyl-tRNA(Leu) + AMP + diphosphate</text>
        <dbReference type="Rhea" id="RHEA:11688"/>
        <dbReference type="Rhea" id="RHEA-COMP:9613"/>
        <dbReference type="Rhea" id="RHEA-COMP:9622"/>
        <dbReference type="ChEBI" id="CHEBI:30616"/>
        <dbReference type="ChEBI" id="CHEBI:33019"/>
        <dbReference type="ChEBI" id="CHEBI:57427"/>
        <dbReference type="ChEBI" id="CHEBI:78442"/>
        <dbReference type="ChEBI" id="CHEBI:78494"/>
        <dbReference type="ChEBI" id="CHEBI:456215"/>
        <dbReference type="EC" id="6.1.1.4"/>
    </reaction>
</comment>
<comment type="subcellular location">
    <subcellularLocation>
        <location evidence="1">Cytoplasm</location>
    </subcellularLocation>
</comment>
<comment type="similarity">
    <text evidence="1">Belongs to the class-I aminoacyl-tRNA synthetase family.</text>
</comment>
<name>SYL_NOSS1</name>
<dbReference type="EC" id="6.1.1.4" evidence="1"/>
<dbReference type="EMBL" id="BA000019">
    <property type="protein sequence ID" value="BAB74982.1"/>
    <property type="molecule type" value="Genomic_DNA"/>
</dbReference>
<dbReference type="PIR" id="AD2216">
    <property type="entry name" value="AD2216"/>
</dbReference>
<dbReference type="RefSeq" id="WP_010997434.1">
    <property type="nucleotide sequence ID" value="NZ_RSCN01000001.1"/>
</dbReference>
<dbReference type="SMR" id="Q8YS09"/>
<dbReference type="STRING" id="103690.gene:10495321"/>
<dbReference type="KEGG" id="ana:alr3283"/>
<dbReference type="eggNOG" id="COG0495">
    <property type="taxonomic scope" value="Bacteria"/>
</dbReference>
<dbReference type="OrthoDB" id="9810365at2"/>
<dbReference type="Proteomes" id="UP000002483">
    <property type="component" value="Chromosome"/>
</dbReference>
<dbReference type="GO" id="GO:0005829">
    <property type="term" value="C:cytosol"/>
    <property type="evidence" value="ECO:0007669"/>
    <property type="project" value="TreeGrafter"/>
</dbReference>
<dbReference type="GO" id="GO:0002161">
    <property type="term" value="F:aminoacyl-tRNA deacylase activity"/>
    <property type="evidence" value="ECO:0007669"/>
    <property type="project" value="InterPro"/>
</dbReference>
<dbReference type="GO" id="GO:0005524">
    <property type="term" value="F:ATP binding"/>
    <property type="evidence" value="ECO:0007669"/>
    <property type="project" value="UniProtKB-UniRule"/>
</dbReference>
<dbReference type="GO" id="GO:0004823">
    <property type="term" value="F:leucine-tRNA ligase activity"/>
    <property type="evidence" value="ECO:0007669"/>
    <property type="project" value="UniProtKB-UniRule"/>
</dbReference>
<dbReference type="GO" id="GO:0006429">
    <property type="term" value="P:leucyl-tRNA aminoacylation"/>
    <property type="evidence" value="ECO:0007669"/>
    <property type="project" value="UniProtKB-UniRule"/>
</dbReference>
<dbReference type="CDD" id="cd07958">
    <property type="entry name" value="Anticodon_Ia_Leu_BEm"/>
    <property type="match status" value="1"/>
</dbReference>
<dbReference type="CDD" id="cd00812">
    <property type="entry name" value="LeuRS_core"/>
    <property type="match status" value="1"/>
</dbReference>
<dbReference type="FunFam" id="3.40.50.620:FF:000003">
    <property type="entry name" value="Leucine--tRNA ligase"/>
    <property type="match status" value="1"/>
</dbReference>
<dbReference type="FunFam" id="1.10.730.10:FF:000011">
    <property type="entry name" value="Leucine--tRNA ligase chloroplastic/mitochondrial"/>
    <property type="match status" value="1"/>
</dbReference>
<dbReference type="FunFam" id="3.40.50.620:FF:000100">
    <property type="entry name" value="probable leucine--tRNA ligase, mitochondrial"/>
    <property type="match status" value="1"/>
</dbReference>
<dbReference type="Gene3D" id="3.40.50.620">
    <property type="entry name" value="HUPs"/>
    <property type="match status" value="2"/>
</dbReference>
<dbReference type="Gene3D" id="1.10.730.10">
    <property type="entry name" value="Isoleucyl-tRNA Synthetase, Domain 1"/>
    <property type="match status" value="1"/>
</dbReference>
<dbReference type="HAMAP" id="MF_00049_B">
    <property type="entry name" value="Leu_tRNA_synth_B"/>
    <property type="match status" value="1"/>
</dbReference>
<dbReference type="InterPro" id="IPR001412">
    <property type="entry name" value="aa-tRNA-synth_I_CS"/>
</dbReference>
<dbReference type="InterPro" id="IPR002300">
    <property type="entry name" value="aa-tRNA-synth_Ia"/>
</dbReference>
<dbReference type="InterPro" id="IPR002302">
    <property type="entry name" value="Leu-tRNA-ligase"/>
</dbReference>
<dbReference type="InterPro" id="IPR025709">
    <property type="entry name" value="Leu_tRNA-synth_edit"/>
</dbReference>
<dbReference type="InterPro" id="IPR013155">
    <property type="entry name" value="M/V/L/I-tRNA-synth_anticd-bd"/>
</dbReference>
<dbReference type="InterPro" id="IPR015413">
    <property type="entry name" value="Methionyl/Leucyl_tRNA_Synth"/>
</dbReference>
<dbReference type="InterPro" id="IPR014729">
    <property type="entry name" value="Rossmann-like_a/b/a_fold"/>
</dbReference>
<dbReference type="InterPro" id="IPR009080">
    <property type="entry name" value="tRNAsynth_Ia_anticodon-bd"/>
</dbReference>
<dbReference type="InterPro" id="IPR009008">
    <property type="entry name" value="Val/Leu/Ile-tRNA-synth_edit"/>
</dbReference>
<dbReference type="NCBIfam" id="TIGR00396">
    <property type="entry name" value="leuS_bact"/>
    <property type="match status" value="1"/>
</dbReference>
<dbReference type="PANTHER" id="PTHR43740:SF2">
    <property type="entry name" value="LEUCINE--TRNA LIGASE, MITOCHONDRIAL"/>
    <property type="match status" value="1"/>
</dbReference>
<dbReference type="PANTHER" id="PTHR43740">
    <property type="entry name" value="LEUCYL-TRNA SYNTHETASE"/>
    <property type="match status" value="1"/>
</dbReference>
<dbReference type="Pfam" id="PF08264">
    <property type="entry name" value="Anticodon_1"/>
    <property type="match status" value="1"/>
</dbReference>
<dbReference type="Pfam" id="PF00133">
    <property type="entry name" value="tRNA-synt_1"/>
    <property type="match status" value="2"/>
</dbReference>
<dbReference type="Pfam" id="PF13603">
    <property type="entry name" value="tRNA-synt_1_2"/>
    <property type="match status" value="1"/>
</dbReference>
<dbReference type="Pfam" id="PF09334">
    <property type="entry name" value="tRNA-synt_1g"/>
    <property type="match status" value="1"/>
</dbReference>
<dbReference type="PRINTS" id="PR00985">
    <property type="entry name" value="TRNASYNTHLEU"/>
</dbReference>
<dbReference type="SUPFAM" id="SSF47323">
    <property type="entry name" value="Anticodon-binding domain of a subclass of class I aminoacyl-tRNA synthetases"/>
    <property type="match status" value="1"/>
</dbReference>
<dbReference type="SUPFAM" id="SSF52374">
    <property type="entry name" value="Nucleotidylyl transferase"/>
    <property type="match status" value="1"/>
</dbReference>
<dbReference type="SUPFAM" id="SSF50677">
    <property type="entry name" value="ValRS/IleRS/LeuRS editing domain"/>
    <property type="match status" value="1"/>
</dbReference>
<dbReference type="PROSITE" id="PS00178">
    <property type="entry name" value="AA_TRNA_LIGASE_I"/>
    <property type="match status" value="1"/>
</dbReference>
<reference key="1">
    <citation type="journal article" date="2001" name="DNA Res.">
        <title>Complete genomic sequence of the filamentous nitrogen-fixing cyanobacterium Anabaena sp. strain PCC 7120.</title>
        <authorList>
            <person name="Kaneko T."/>
            <person name="Nakamura Y."/>
            <person name="Wolk C.P."/>
            <person name="Kuritz T."/>
            <person name="Sasamoto S."/>
            <person name="Watanabe A."/>
            <person name="Iriguchi M."/>
            <person name="Ishikawa A."/>
            <person name="Kawashima K."/>
            <person name="Kimura T."/>
            <person name="Kishida Y."/>
            <person name="Kohara M."/>
            <person name="Matsumoto M."/>
            <person name="Matsuno A."/>
            <person name="Muraki A."/>
            <person name="Nakazaki N."/>
            <person name="Shimpo S."/>
            <person name="Sugimoto M."/>
            <person name="Takazawa M."/>
            <person name="Yamada M."/>
            <person name="Yasuda M."/>
            <person name="Tabata S."/>
        </authorList>
    </citation>
    <scope>NUCLEOTIDE SEQUENCE [LARGE SCALE GENOMIC DNA]</scope>
    <source>
        <strain>PCC 7120 / SAG 25.82 / UTEX 2576</strain>
    </source>
</reference>
<gene>
    <name evidence="1" type="primary">leuS</name>
    <name type="ordered locus">alr3283</name>
</gene>
<evidence type="ECO:0000255" key="1">
    <source>
        <dbReference type="HAMAP-Rule" id="MF_00049"/>
    </source>
</evidence>
<organism>
    <name type="scientific">Nostoc sp. (strain PCC 7120 / SAG 25.82 / UTEX 2576)</name>
    <dbReference type="NCBI Taxonomy" id="103690"/>
    <lineage>
        <taxon>Bacteria</taxon>
        <taxon>Bacillati</taxon>
        <taxon>Cyanobacteriota</taxon>
        <taxon>Cyanophyceae</taxon>
        <taxon>Nostocales</taxon>
        <taxon>Nostocaceae</taxon>
        <taxon>Nostoc</taxon>
    </lineage>
</organism>
<sequence>MDSRYNPATLEEKWQKTWVELGLDKTQTQSNKPKFYALSMFPYPSGSLHMGHVRNYTITDVIARLKRMQGYRVLHPMGWDAFGLPAENAAIDRGVPPAKWTYQNITQMRQQLQRLGLSIDWDSEVATCSPDYYKWTQWIFLQFLQAGLAYQKEAAVNWDPIDQTVLANEQVDNEGRSWRSGAIVERKLLRQWFLKITDYAEELLNDLDKLTGWPERVKLMQANWIGKSSGAYLEFPIVGSNEKIAVYTTRPDTVYGVSYVVLAPEHPLTKQVTTKTQQAAVDTFIQEVTNQSELERTAEDKPKRGIATGGKAINPFTGEEVPIWIADYVLYEYGTGAVMGVPAHDVRDFKFAQRYDLPIDFVIAAPDDVAGFDLSPTSETEEVTQVVQIEYNQAYTEPGILINSGAFTGMTSTDAKQAIVKYATEKGFGKERIQYRLRDWLISRQRYWGAPIPVIHCPNCGIVPVPDKDLPVILPEEVEFTGRGGSPLAQLESWVNVPCPTCGTPAKRETDTMDTFIDSSWYFLRFTDARNEAQVFESAKTNDWMPVDQYVGGIEHAILHLLYSRFFTKVLRDRGLLNFDEPFERLLTQGMVQGLTYFNPNKGGKDKWVPSHLVNPNDPRDPQTGEPLQRLYATMSKSKGNGVAPEDVIAKYGVDTARMFILFKAPPEKDLEWDEADVEGQFRFLNRVWRLVTDYVASGVNPKNKSGELSKSEKDLRRAIHTAIQSVTEDLEDDYQFNTAISELMKLSNALTDANGKDSRVYAEGIKTLVVLLAPFAPHIAEELWRLLGNSESVHTQTWPAFDPAALVADEITLVIQVNGKKRADIQVPSQADKAELEKYARESEVVQRHLEGKEIKKVIVVPGKLVNFVVG</sequence>
<proteinExistence type="inferred from homology"/>